<gene>
    <name evidence="1" type="primary">alaS</name>
    <name type="ordered locus">GK2556</name>
</gene>
<keyword id="KW-0030">Aminoacyl-tRNA synthetase</keyword>
<keyword id="KW-0067">ATP-binding</keyword>
<keyword id="KW-0963">Cytoplasm</keyword>
<keyword id="KW-0436">Ligase</keyword>
<keyword id="KW-0479">Metal-binding</keyword>
<keyword id="KW-0547">Nucleotide-binding</keyword>
<keyword id="KW-0648">Protein biosynthesis</keyword>
<keyword id="KW-1185">Reference proteome</keyword>
<keyword id="KW-0694">RNA-binding</keyword>
<keyword id="KW-0820">tRNA-binding</keyword>
<keyword id="KW-0862">Zinc</keyword>
<protein>
    <recommendedName>
        <fullName evidence="1">Alanine--tRNA ligase</fullName>
        <ecNumber evidence="1">6.1.1.7</ecNumber>
    </recommendedName>
    <alternativeName>
        <fullName evidence="1">Alanyl-tRNA synthetase</fullName>
        <shortName evidence="1">AlaRS</shortName>
    </alternativeName>
</protein>
<reference key="1">
    <citation type="journal article" date="2004" name="Nucleic Acids Res.">
        <title>Thermoadaptation trait revealed by the genome sequence of thermophilic Geobacillus kaustophilus.</title>
        <authorList>
            <person name="Takami H."/>
            <person name="Takaki Y."/>
            <person name="Chee G.-J."/>
            <person name="Nishi S."/>
            <person name="Shimamura S."/>
            <person name="Suzuki H."/>
            <person name="Matsui S."/>
            <person name="Uchiyama I."/>
        </authorList>
    </citation>
    <scope>NUCLEOTIDE SEQUENCE [LARGE SCALE GENOMIC DNA]</scope>
    <source>
        <strain>HTA426</strain>
    </source>
</reference>
<dbReference type="EC" id="6.1.1.7" evidence="1"/>
<dbReference type="EMBL" id="BA000043">
    <property type="protein sequence ID" value="BAD76841.1"/>
    <property type="molecule type" value="Genomic_DNA"/>
</dbReference>
<dbReference type="RefSeq" id="WP_011232034.1">
    <property type="nucleotide sequence ID" value="NC_006510.1"/>
</dbReference>
<dbReference type="SMR" id="Q5KWU5"/>
<dbReference type="STRING" id="235909.GK2556"/>
<dbReference type="KEGG" id="gka:GK2556"/>
<dbReference type="PATRIC" id="fig|235909.7.peg.2735"/>
<dbReference type="eggNOG" id="COG0013">
    <property type="taxonomic scope" value="Bacteria"/>
</dbReference>
<dbReference type="HOGENOM" id="CLU_004485_1_1_9"/>
<dbReference type="Proteomes" id="UP000001172">
    <property type="component" value="Chromosome"/>
</dbReference>
<dbReference type="GO" id="GO:0005829">
    <property type="term" value="C:cytosol"/>
    <property type="evidence" value="ECO:0007669"/>
    <property type="project" value="TreeGrafter"/>
</dbReference>
<dbReference type="GO" id="GO:0004813">
    <property type="term" value="F:alanine-tRNA ligase activity"/>
    <property type="evidence" value="ECO:0007669"/>
    <property type="project" value="UniProtKB-UniRule"/>
</dbReference>
<dbReference type="GO" id="GO:0002161">
    <property type="term" value="F:aminoacyl-tRNA deacylase activity"/>
    <property type="evidence" value="ECO:0007669"/>
    <property type="project" value="TreeGrafter"/>
</dbReference>
<dbReference type="GO" id="GO:0005524">
    <property type="term" value="F:ATP binding"/>
    <property type="evidence" value="ECO:0007669"/>
    <property type="project" value="UniProtKB-UniRule"/>
</dbReference>
<dbReference type="GO" id="GO:0140096">
    <property type="term" value="F:catalytic activity, acting on a protein"/>
    <property type="evidence" value="ECO:0007669"/>
    <property type="project" value="UniProtKB-ARBA"/>
</dbReference>
<dbReference type="GO" id="GO:0016740">
    <property type="term" value="F:transferase activity"/>
    <property type="evidence" value="ECO:0007669"/>
    <property type="project" value="UniProtKB-ARBA"/>
</dbReference>
<dbReference type="GO" id="GO:0000049">
    <property type="term" value="F:tRNA binding"/>
    <property type="evidence" value="ECO:0007669"/>
    <property type="project" value="UniProtKB-KW"/>
</dbReference>
<dbReference type="GO" id="GO:0008270">
    <property type="term" value="F:zinc ion binding"/>
    <property type="evidence" value="ECO:0007669"/>
    <property type="project" value="UniProtKB-UniRule"/>
</dbReference>
<dbReference type="GO" id="GO:0006419">
    <property type="term" value="P:alanyl-tRNA aminoacylation"/>
    <property type="evidence" value="ECO:0007669"/>
    <property type="project" value="UniProtKB-UniRule"/>
</dbReference>
<dbReference type="CDD" id="cd00673">
    <property type="entry name" value="AlaRS_core"/>
    <property type="match status" value="1"/>
</dbReference>
<dbReference type="FunFam" id="2.40.30.130:FF:000001">
    <property type="entry name" value="Alanine--tRNA ligase"/>
    <property type="match status" value="1"/>
</dbReference>
<dbReference type="FunFam" id="3.10.310.40:FF:000001">
    <property type="entry name" value="Alanine--tRNA ligase"/>
    <property type="match status" value="1"/>
</dbReference>
<dbReference type="FunFam" id="3.30.54.20:FF:000001">
    <property type="entry name" value="Alanine--tRNA ligase"/>
    <property type="match status" value="1"/>
</dbReference>
<dbReference type="FunFam" id="3.30.930.10:FF:000046">
    <property type="entry name" value="Alanine--tRNA ligase"/>
    <property type="match status" value="1"/>
</dbReference>
<dbReference type="FunFam" id="3.30.980.10:FF:000004">
    <property type="entry name" value="Alanine--tRNA ligase, cytoplasmic"/>
    <property type="match status" value="1"/>
</dbReference>
<dbReference type="Gene3D" id="2.40.30.130">
    <property type="match status" value="1"/>
</dbReference>
<dbReference type="Gene3D" id="3.10.310.40">
    <property type="match status" value="1"/>
</dbReference>
<dbReference type="Gene3D" id="3.30.54.20">
    <property type="match status" value="1"/>
</dbReference>
<dbReference type="Gene3D" id="6.10.250.550">
    <property type="match status" value="1"/>
</dbReference>
<dbReference type="Gene3D" id="3.30.930.10">
    <property type="entry name" value="Bira Bifunctional Protein, Domain 2"/>
    <property type="match status" value="1"/>
</dbReference>
<dbReference type="Gene3D" id="3.30.980.10">
    <property type="entry name" value="Threonyl-trna Synthetase, Chain A, domain 2"/>
    <property type="match status" value="1"/>
</dbReference>
<dbReference type="HAMAP" id="MF_00036_B">
    <property type="entry name" value="Ala_tRNA_synth_B"/>
    <property type="match status" value="1"/>
</dbReference>
<dbReference type="InterPro" id="IPR045864">
    <property type="entry name" value="aa-tRNA-synth_II/BPL/LPL"/>
</dbReference>
<dbReference type="InterPro" id="IPR002318">
    <property type="entry name" value="Ala-tRNA-lgiase_IIc"/>
</dbReference>
<dbReference type="InterPro" id="IPR018162">
    <property type="entry name" value="Ala-tRNA-ligase_IIc_anticod-bd"/>
</dbReference>
<dbReference type="InterPro" id="IPR018165">
    <property type="entry name" value="Ala-tRNA-synth_IIc_core"/>
</dbReference>
<dbReference type="InterPro" id="IPR018164">
    <property type="entry name" value="Ala-tRNA-synth_IIc_N"/>
</dbReference>
<dbReference type="InterPro" id="IPR050058">
    <property type="entry name" value="Ala-tRNA_ligase"/>
</dbReference>
<dbReference type="InterPro" id="IPR023033">
    <property type="entry name" value="Ala_tRNA_ligase_euk/bac"/>
</dbReference>
<dbReference type="InterPro" id="IPR003156">
    <property type="entry name" value="DHHA1_dom"/>
</dbReference>
<dbReference type="InterPro" id="IPR018163">
    <property type="entry name" value="Thr/Ala-tRNA-synth_IIc_edit"/>
</dbReference>
<dbReference type="InterPro" id="IPR009000">
    <property type="entry name" value="Transl_B-barrel_sf"/>
</dbReference>
<dbReference type="InterPro" id="IPR012947">
    <property type="entry name" value="tRNA_SAD"/>
</dbReference>
<dbReference type="NCBIfam" id="TIGR00344">
    <property type="entry name" value="alaS"/>
    <property type="match status" value="1"/>
</dbReference>
<dbReference type="PANTHER" id="PTHR11777:SF9">
    <property type="entry name" value="ALANINE--TRNA LIGASE, CYTOPLASMIC"/>
    <property type="match status" value="1"/>
</dbReference>
<dbReference type="PANTHER" id="PTHR11777">
    <property type="entry name" value="ALANYL-TRNA SYNTHETASE"/>
    <property type="match status" value="1"/>
</dbReference>
<dbReference type="Pfam" id="PF02272">
    <property type="entry name" value="DHHA1"/>
    <property type="match status" value="1"/>
</dbReference>
<dbReference type="Pfam" id="PF01411">
    <property type="entry name" value="tRNA-synt_2c"/>
    <property type="match status" value="1"/>
</dbReference>
<dbReference type="Pfam" id="PF07973">
    <property type="entry name" value="tRNA_SAD"/>
    <property type="match status" value="1"/>
</dbReference>
<dbReference type="PRINTS" id="PR00980">
    <property type="entry name" value="TRNASYNTHALA"/>
</dbReference>
<dbReference type="SMART" id="SM00863">
    <property type="entry name" value="tRNA_SAD"/>
    <property type="match status" value="1"/>
</dbReference>
<dbReference type="SUPFAM" id="SSF55681">
    <property type="entry name" value="Class II aaRS and biotin synthetases"/>
    <property type="match status" value="1"/>
</dbReference>
<dbReference type="SUPFAM" id="SSF101353">
    <property type="entry name" value="Putative anticodon-binding domain of alanyl-tRNA synthetase (AlaRS)"/>
    <property type="match status" value="1"/>
</dbReference>
<dbReference type="SUPFAM" id="SSF55186">
    <property type="entry name" value="ThrRS/AlaRS common domain"/>
    <property type="match status" value="1"/>
</dbReference>
<dbReference type="SUPFAM" id="SSF50447">
    <property type="entry name" value="Translation proteins"/>
    <property type="match status" value="1"/>
</dbReference>
<dbReference type="PROSITE" id="PS50860">
    <property type="entry name" value="AA_TRNA_LIGASE_II_ALA"/>
    <property type="match status" value="1"/>
</dbReference>
<proteinExistence type="inferred from homology"/>
<accession>Q5KWU5</accession>
<sequence length="887" mass="98754">MKKLTSAQVRRMFLEFFQEKGHAVEPSASLIPVDDPSLLWINSGVATLKKYFDGRIVPENPRICIVPENPRICNAQKSIRTNDIENVGKTARHHTFFEMLGNFSIGDYFKREAIHWAWEFLTSDKWIGFDPERLSVTVHPEDEEAYNIWRNEIGLPEERIIRLEGNFWDIGEGPSGPNTEIFYDRGEAFGNDPNDPELYPGGENDRYLEVWNLVFSQFNHNPDGTYTPLPKKNIDTGMGLERMCSILQDVPTNFETDLFLPIIRATEQIAGERYGEDPDKDVAFKVIADHIRAVTFAIGDGALPSNEGRGYVLRRLLRRAVRYAKHIGIDRPFMYELVPVVGEIMHDYYPEVKEKADFIARVIRTEEERFHETLHEGLAILAEVIEKAKEQGSDVIPGEEAFRLYDTYGFPIELTEEYAAEAGMTVDHAGFEREMERQRERARAARQDVDSMQVQGGVLGDIKDESRFVGYDELVAASTVIAIVKDGRLVEEVKAGEEAQIIVDVTPFYAESGGQIADQGVFESETGTAVVKDVQKAPNGQHLHAIIVERGTVKKGSRYTARVDEAKRMRIVKNHTATHLLHQALKDVLGRHVNQAGSLVAPDRLRFDFTHFGQVKPEELERIEAIVNEQIWKSLPVDIFYKPLEEAKAMGAMALFGEKYGDIVRVVKVGDYSLELCGGCHVPNTSAIGLFKIVSESGIGAGTRRIEAVTGEAAYRFMSEQLAILQEAAQKLKTSPKELNARLDGLFAELKELERENESLAARLAHMEAEHLTRQVKDVNGVPVLAAKVQANDMNQLRAMADDLKQKLGTAVIVLASAQGGKVQLIAAVTDDLVKKGFHAGKLVKEVASRCGGGGGGRPDLAQAGGKDPSKVGEALGYVETWVKSVS</sequence>
<name>SYA_GEOKA</name>
<comment type="function">
    <text evidence="1">Catalyzes the attachment of alanine to tRNA(Ala) in a two-step reaction: alanine is first activated by ATP to form Ala-AMP and then transferred to the acceptor end of tRNA(Ala). Also edits incorrectly charged Ser-tRNA(Ala) and Gly-tRNA(Ala) via its editing domain.</text>
</comment>
<comment type="catalytic activity">
    <reaction evidence="1">
        <text>tRNA(Ala) + L-alanine + ATP = L-alanyl-tRNA(Ala) + AMP + diphosphate</text>
        <dbReference type="Rhea" id="RHEA:12540"/>
        <dbReference type="Rhea" id="RHEA-COMP:9657"/>
        <dbReference type="Rhea" id="RHEA-COMP:9923"/>
        <dbReference type="ChEBI" id="CHEBI:30616"/>
        <dbReference type="ChEBI" id="CHEBI:33019"/>
        <dbReference type="ChEBI" id="CHEBI:57972"/>
        <dbReference type="ChEBI" id="CHEBI:78442"/>
        <dbReference type="ChEBI" id="CHEBI:78497"/>
        <dbReference type="ChEBI" id="CHEBI:456215"/>
        <dbReference type="EC" id="6.1.1.7"/>
    </reaction>
</comment>
<comment type="cofactor">
    <cofactor evidence="1">
        <name>Zn(2+)</name>
        <dbReference type="ChEBI" id="CHEBI:29105"/>
    </cofactor>
    <text evidence="1">Binds 1 zinc ion per subunit.</text>
</comment>
<comment type="subcellular location">
    <subcellularLocation>
        <location evidence="1">Cytoplasm</location>
    </subcellularLocation>
</comment>
<comment type="domain">
    <text evidence="1">Consists of three domains; the N-terminal catalytic domain, the editing domain and the C-terminal C-Ala domain. The editing domain removes incorrectly charged amino acids, while the C-Ala domain, along with tRNA(Ala), serves as a bridge to cooperatively bring together the editing and aminoacylation centers thus stimulating deacylation of misacylated tRNAs.</text>
</comment>
<comment type="similarity">
    <text evidence="1">Belongs to the class-II aminoacyl-tRNA synthetase family.</text>
</comment>
<organism>
    <name type="scientific">Geobacillus kaustophilus (strain HTA426)</name>
    <dbReference type="NCBI Taxonomy" id="235909"/>
    <lineage>
        <taxon>Bacteria</taxon>
        <taxon>Bacillati</taxon>
        <taxon>Bacillota</taxon>
        <taxon>Bacilli</taxon>
        <taxon>Bacillales</taxon>
        <taxon>Anoxybacillaceae</taxon>
        <taxon>Geobacillus</taxon>
        <taxon>Geobacillus thermoleovorans group</taxon>
    </lineage>
</organism>
<evidence type="ECO:0000255" key="1">
    <source>
        <dbReference type="HAMAP-Rule" id="MF_00036"/>
    </source>
</evidence>
<feature type="chain" id="PRO_0000075117" description="Alanine--tRNA ligase">
    <location>
        <begin position="1"/>
        <end position="887"/>
    </location>
</feature>
<feature type="binding site" evidence="1">
    <location>
        <position position="575"/>
    </location>
    <ligand>
        <name>Zn(2+)</name>
        <dbReference type="ChEBI" id="CHEBI:29105"/>
    </ligand>
</feature>
<feature type="binding site" evidence="1">
    <location>
        <position position="579"/>
    </location>
    <ligand>
        <name>Zn(2+)</name>
        <dbReference type="ChEBI" id="CHEBI:29105"/>
    </ligand>
</feature>
<feature type="binding site" evidence="1">
    <location>
        <position position="677"/>
    </location>
    <ligand>
        <name>Zn(2+)</name>
        <dbReference type="ChEBI" id="CHEBI:29105"/>
    </ligand>
</feature>
<feature type="binding site" evidence="1">
    <location>
        <position position="681"/>
    </location>
    <ligand>
        <name>Zn(2+)</name>
        <dbReference type="ChEBI" id="CHEBI:29105"/>
    </ligand>
</feature>